<sequence length="152" mass="17318">MKKRLFVLSLILLVALDQLSKFWIVSHIALGEVKPFIPGIVSLTYLQNNGAAFSILQDQQWFFVVITVLVIGYAIYYLATHPHLNIWKQLALLLIISGGIGNFIDRLRLAYVIDMIHLDFMDFAIFNVADSYLTVGVILLVICLWKEEDYGN</sequence>
<gene>
    <name evidence="1" type="primary">lspA</name>
    <name type="ordered locus">MGAS10270_Spy0693</name>
</gene>
<organism>
    <name type="scientific">Streptococcus pyogenes serotype M2 (strain MGAS10270)</name>
    <dbReference type="NCBI Taxonomy" id="370552"/>
    <lineage>
        <taxon>Bacteria</taxon>
        <taxon>Bacillati</taxon>
        <taxon>Bacillota</taxon>
        <taxon>Bacilli</taxon>
        <taxon>Lactobacillales</taxon>
        <taxon>Streptococcaceae</taxon>
        <taxon>Streptococcus</taxon>
    </lineage>
</organism>
<protein>
    <recommendedName>
        <fullName evidence="1">Lipoprotein signal peptidase</fullName>
        <ecNumber evidence="1">3.4.23.36</ecNumber>
    </recommendedName>
    <alternativeName>
        <fullName evidence="1">Prolipoprotein signal peptidase</fullName>
    </alternativeName>
    <alternativeName>
        <fullName evidence="1">Signal peptidase II</fullName>
        <shortName evidence="1">SPase II</shortName>
    </alternativeName>
</protein>
<accession>Q1JHH8</accession>
<reference key="1">
    <citation type="journal article" date="2006" name="Proc. Natl. Acad. Sci. U.S.A.">
        <title>Molecular genetic anatomy of inter- and intraserotype variation in the human bacterial pathogen group A Streptococcus.</title>
        <authorList>
            <person name="Beres S.B."/>
            <person name="Richter E.W."/>
            <person name="Nagiec M.J."/>
            <person name="Sumby P."/>
            <person name="Porcella S.F."/>
            <person name="DeLeo F.R."/>
            <person name="Musser J.M."/>
        </authorList>
    </citation>
    <scope>NUCLEOTIDE SEQUENCE [LARGE SCALE GENOMIC DNA]</scope>
    <source>
        <strain>MGAS10270</strain>
    </source>
</reference>
<feature type="chain" id="PRO_0000289442" description="Lipoprotein signal peptidase">
    <location>
        <begin position="1"/>
        <end position="152"/>
    </location>
</feature>
<feature type="transmembrane region" description="Helical" evidence="1">
    <location>
        <begin position="5"/>
        <end position="25"/>
    </location>
</feature>
<feature type="transmembrane region" description="Helical" evidence="1">
    <location>
        <begin position="61"/>
        <end position="81"/>
    </location>
</feature>
<feature type="transmembrane region" description="Helical" evidence="1">
    <location>
        <begin position="84"/>
        <end position="104"/>
    </location>
</feature>
<feature type="transmembrane region" description="Helical" evidence="1">
    <location>
        <begin position="125"/>
        <end position="145"/>
    </location>
</feature>
<feature type="active site" evidence="1">
    <location>
        <position position="114"/>
    </location>
</feature>
<feature type="active site" evidence="1">
    <location>
        <position position="130"/>
    </location>
</feature>
<proteinExistence type="inferred from homology"/>
<evidence type="ECO:0000255" key="1">
    <source>
        <dbReference type="HAMAP-Rule" id="MF_00161"/>
    </source>
</evidence>
<name>LSPA_STRPD</name>
<dbReference type="EC" id="3.4.23.36" evidence="1"/>
<dbReference type="EMBL" id="CP000260">
    <property type="protein sequence ID" value="ABF33758.1"/>
    <property type="molecule type" value="Genomic_DNA"/>
</dbReference>
<dbReference type="RefSeq" id="WP_012560604.1">
    <property type="nucleotide sequence ID" value="NZ_CVUH01000002.1"/>
</dbReference>
<dbReference type="SMR" id="Q1JHH8"/>
<dbReference type="KEGG" id="sph:MGAS10270_Spy0693"/>
<dbReference type="HOGENOM" id="CLU_083252_3_3_9"/>
<dbReference type="UniPathway" id="UPA00665"/>
<dbReference type="Proteomes" id="UP000002436">
    <property type="component" value="Chromosome"/>
</dbReference>
<dbReference type="GO" id="GO:0005886">
    <property type="term" value="C:plasma membrane"/>
    <property type="evidence" value="ECO:0007669"/>
    <property type="project" value="UniProtKB-SubCell"/>
</dbReference>
<dbReference type="GO" id="GO:0004190">
    <property type="term" value="F:aspartic-type endopeptidase activity"/>
    <property type="evidence" value="ECO:0007669"/>
    <property type="project" value="UniProtKB-UniRule"/>
</dbReference>
<dbReference type="GO" id="GO:0006508">
    <property type="term" value="P:proteolysis"/>
    <property type="evidence" value="ECO:0007669"/>
    <property type="project" value="UniProtKB-KW"/>
</dbReference>
<dbReference type="HAMAP" id="MF_00161">
    <property type="entry name" value="LspA"/>
    <property type="match status" value="1"/>
</dbReference>
<dbReference type="InterPro" id="IPR001872">
    <property type="entry name" value="Peptidase_A8"/>
</dbReference>
<dbReference type="NCBIfam" id="TIGR00077">
    <property type="entry name" value="lspA"/>
    <property type="match status" value="1"/>
</dbReference>
<dbReference type="PANTHER" id="PTHR33695">
    <property type="entry name" value="LIPOPROTEIN SIGNAL PEPTIDASE"/>
    <property type="match status" value="1"/>
</dbReference>
<dbReference type="PANTHER" id="PTHR33695:SF1">
    <property type="entry name" value="LIPOPROTEIN SIGNAL PEPTIDASE"/>
    <property type="match status" value="1"/>
</dbReference>
<dbReference type="Pfam" id="PF01252">
    <property type="entry name" value="Peptidase_A8"/>
    <property type="match status" value="1"/>
</dbReference>
<dbReference type="PRINTS" id="PR00781">
    <property type="entry name" value="LIPOSIGPTASE"/>
</dbReference>
<dbReference type="PROSITE" id="PS00855">
    <property type="entry name" value="SPASE_II"/>
    <property type="match status" value="1"/>
</dbReference>
<comment type="function">
    <text evidence="1">This protein specifically catalyzes the removal of signal peptides from prolipoproteins.</text>
</comment>
<comment type="catalytic activity">
    <reaction evidence="1">
        <text>Release of signal peptides from bacterial membrane prolipoproteins. Hydrolyzes -Xaa-Yaa-Zaa-|-(S,diacylglyceryl)Cys-, in which Xaa is hydrophobic (preferably Leu), and Yaa (Ala or Ser) and Zaa (Gly or Ala) have small, neutral side chains.</text>
        <dbReference type="EC" id="3.4.23.36"/>
    </reaction>
</comment>
<comment type="pathway">
    <text evidence="1">Protein modification; lipoprotein biosynthesis (signal peptide cleavage).</text>
</comment>
<comment type="subcellular location">
    <subcellularLocation>
        <location evidence="1">Cell membrane</location>
        <topology evidence="1">Multi-pass membrane protein</topology>
    </subcellularLocation>
</comment>
<comment type="similarity">
    <text evidence="1">Belongs to the peptidase A8 family.</text>
</comment>
<keyword id="KW-0064">Aspartyl protease</keyword>
<keyword id="KW-1003">Cell membrane</keyword>
<keyword id="KW-0378">Hydrolase</keyword>
<keyword id="KW-0472">Membrane</keyword>
<keyword id="KW-0645">Protease</keyword>
<keyword id="KW-0812">Transmembrane</keyword>
<keyword id="KW-1133">Transmembrane helix</keyword>